<gene>
    <name type="primary">RPH3AL</name>
    <name type="synonym">NOC2</name>
</gene>
<evidence type="ECO:0000250" key="1"/>
<evidence type="ECO:0000255" key="2">
    <source>
        <dbReference type="PROSITE-ProRule" id="PRU00091"/>
    </source>
</evidence>
<evidence type="ECO:0000255" key="3">
    <source>
        <dbReference type="PROSITE-ProRule" id="PRU00234"/>
    </source>
</evidence>
<evidence type="ECO:0000256" key="4">
    <source>
        <dbReference type="SAM" id="MobiDB-lite"/>
    </source>
</evidence>
<evidence type="ECO:0000269" key="5">
    <source>
    </source>
</evidence>
<evidence type="ECO:0000269" key="6">
    <source>
    </source>
</evidence>
<evidence type="ECO:0000303" key="7">
    <source>
    </source>
</evidence>
<evidence type="ECO:0000305" key="8"/>
<keyword id="KW-0025">Alternative splicing</keyword>
<keyword id="KW-0963">Cytoplasm</keyword>
<keyword id="KW-0968">Cytoplasmic vesicle</keyword>
<keyword id="KW-0268">Exocytosis</keyword>
<keyword id="KW-0472">Membrane</keyword>
<keyword id="KW-0479">Metal-binding</keyword>
<keyword id="KW-1267">Proteomics identification</keyword>
<keyword id="KW-1185">Reference proteome</keyword>
<keyword id="KW-0862">Zinc</keyword>
<keyword id="KW-0863">Zinc-finger</keyword>
<sequence>MADTIFGSGNDQWVCPNDRQLALRAKLQTGWSVHTYQTEKQRRKQHLSPAEVEAILQVIQRAERLDVLEQQRIGRLVERLETMRRNVMGNGLSQCLLCGEVLGFLGSSSVFCKDCRKKVCTKCGIEASPGQKRPLWLCKICSEQREVWKRSGAWFYKGLPKYILPLKTPGRADDPHFRPLPTEPAEREPRSSETSRIYTWARGRVVSSDSDSDSDLSSSSLEDRLPSTGVRDRKGDKPWKESGGSVEAPRMGFTHPPGHLSGCQSSLASGETGTGSADPPGGPRPGLTRRAPVKDTPGRAPAADAAPAGPSSCLG</sequence>
<protein>
    <recommendedName>
        <fullName>Rab effector Noc2</fullName>
    </recommendedName>
    <alternativeName>
        <fullName>No C2 domains protein</fullName>
    </alternativeName>
    <alternativeName>
        <fullName>Rabphilin-3A-like protein</fullName>
    </alternativeName>
</protein>
<proteinExistence type="evidence at protein level"/>
<organism>
    <name type="scientific">Homo sapiens</name>
    <name type="common">Human</name>
    <dbReference type="NCBI Taxonomy" id="9606"/>
    <lineage>
        <taxon>Eukaryota</taxon>
        <taxon>Metazoa</taxon>
        <taxon>Chordata</taxon>
        <taxon>Craniata</taxon>
        <taxon>Vertebrata</taxon>
        <taxon>Euteleostomi</taxon>
        <taxon>Mammalia</taxon>
        <taxon>Eutheria</taxon>
        <taxon>Euarchontoglires</taxon>
        <taxon>Primates</taxon>
        <taxon>Haplorrhini</taxon>
        <taxon>Catarrhini</taxon>
        <taxon>Hominidae</taxon>
        <taxon>Homo</taxon>
    </lineage>
</organism>
<reference key="1">
    <citation type="journal article" date="1999" name="Genomics">
        <title>Cloning of a human ortholog (RPH3AL) of (RNO)Rph3al from a candidate 17p13.3 medulloblastoma tumor suppressor locus.</title>
        <authorList>
            <person name="Smith J.S."/>
            <person name="Tachibana I."/>
            <person name="Allen C."/>
            <person name="Chiappa S.A."/>
            <person name="Lee H.K."/>
            <person name="McIver B."/>
            <person name="Jenkins R.B."/>
            <person name="Raffel C."/>
        </authorList>
    </citation>
    <scope>NUCLEOTIDE SEQUENCE [MRNA] (ISOFORM 1)</scope>
    <scope>TISSUE SPECIFICITY</scope>
</reference>
<reference key="2">
    <citation type="journal article" date="2004" name="Nat. Genet.">
        <title>Complete sequencing and characterization of 21,243 full-length human cDNAs.</title>
        <authorList>
            <person name="Ota T."/>
            <person name="Suzuki Y."/>
            <person name="Nishikawa T."/>
            <person name="Otsuki T."/>
            <person name="Sugiyama T."/>
            <person name="Irie R."/>
            <person name="Wakamatsu A."/>
            <person name="Hayashi K."/>
            <person name="Sato H."/>
            <person name="Nagai K."/>
            <person name="Kimura K."/>
            <person name="Makita H."/>
            <person name="Sekine M."/>
            <person name="Obayashi M."/>
            <person name="Nishi T."/>
            <person name="Shibahara T."/>
            <person name="Tanaka T."/>
            <person name="Ishii S."/>
            <person name="Yamamoto J."/>
            <person name="Saito K."/>
            <person name="Kawai Y."/>
            <person name="Isono Y."/>
            <person name="Nakamura Y."/>
            <person name="Nagahari K."/>
            <person name="Murakami K."/>
            <person name="Yasuda T."/>
            <person name="Iwayanagi T."/>
            <person name="Wagatsuma M."/>
            <person name="Shiratori A."/>
            <person name="Sudo H."/>
            <person name="Hosoiri T."/>
            <person name="Kaku Y."/>
            <person name="Kodaira H."/>
            <person name="Kondo H."/>
            <person name="Sugawara M."/>
            <person name="Takahashi M."/>
            <person name="Kanda K."/>
            <person name="Yokoi T."/>
            <person name="Furuya T."/>
            <person name="Kikkawa E."/>
            <person name="Omura Y."/>
            <person name="Abe K."/>
            <person name="Kamihara K."/>
            <person name="Katsuta N."/>
            <person name="Sato K."/>
            <person name="Tanikawa M."/>
            <person name="Yamazaki M."/>
            <person name="Ninomiya K."/>
            <person name="Ishibashi T."/>
            <person name="Yamashita H."/>
            <person name="Murakawa K."/>
            <person name="Fujimori K."/>
            <person name="Tanai H."/>
            <person name="Kimata M."/>
            <person name="Watanabe M."/>
            <person name="Hiraoka S."/>
            <person name="Chiba Y."/>
            <person name="Ishida S."/>
            <person name="Ono Y."/>
            <person name="Takiguchi S."/>
            <person name="Watanabe S."/>
            <person name="Yosida M."/>
            <person name="Hotuta T."/>
            <person name="Kusano J."/>
            <person name="Kanehori K."/>
            <person name="Takahashi-Fujii A."/>
            <person name="Hara H."/>
            <person name="Tanase T.-O."/>
            <person name="Nomura Y."/>
            <person name="Togiya S."/>
            <person name="Komai F."/>
            <person name="Hara R."/>
            <person name="Takeuchi K."/>
            <person name="Arita M."/>
            <person name="Imose N."/>
            <person name="Musashino K."/>
            <person name="Yuuki H."/>
            <person name="Oshima A."/>
            <person name="Sasaki N."/>
            <person name="Aotsuka S."/>
            <person name="Yoshikawa Y."/>
            <person name="Matsunawa H."/>
            <person name="Ichihara T."/>
            <person name="Shiohata N."/>
            <person name="Sano S."/>
            <person name="Moriya S."/>
            <person name="Momiyama H."/>
            <person name="Satoh N."/>
            <person name="Takami S."/>
            <person name="Terashima Y."/>
            <person name="Suzuki O."/>
            <person name="Nakagawa S."/>
            <person name="Senoh A."/>
            <person name="Mizoguchi H."/>
            <person name="Goto Y."/>
            <person name="Shimizu F."/>
            <person name="Wakebe H."/>
            <person name="Hishigaki H."/>
            <person name="Watanabe T."/>
            <person name="Sugiyama A."/>
            <person name="Takemoto M."/>
            <person name="Kawakami B."/>
            <person name="Yamazaki M."/>
            <person name="Watanabe K."/>
            <person name="Kumagai A."/>
            <person name="Itakura S."/>
            <person name="Fukuzumi Y."/>
            <person name="Fujimori Y."/>
            <person name="Komiyama M."/>
            <person name="Tashiro H."/>
            <person name="Tanigami A."/>
            <person name="Fujiwara T."/>
            <person name="Ono T."/>
            <person name="Yamada K."/>
            <person name="Fujii Y."/>
            <person name="Ozaki K."/>
            <person name="Hirao M."/>
            <person name="Ohmori Y."/>
            <person name="Kawabata A."/>
            <person name="Hikiji T."/>
            <person name="Kobatake N."/>
            <person name="Inagaki H."/>
            <person name="Ikema Y."/>
            <person name="Okamoto S."/>
            <person name="Okitani R."/>
            <person name="Kawakami T."/>
            <person name="Noguchi S."/>
            <person name="Itoh T."/>
            <person name="Shigeta K."/>
            <person name="Senba T."/>
            <person name="Matsumura K."/>
            <person name="Nakajima Y."/>
            <person name="Mizuno T."/>
            <person name="Morinaga M."/>
            <person name="Sasaki M."/>
            <person name="Togashi T."/>
            <person name="Oyama M."/>
            <person name="Hata H."/>
            <person name="Watanabe M."/>
            <person name="Komatsu T."/>
            <person name="Mizushima-Sugano J."/>
            <person name="Satoh T."/>
            <person name="Shirai Y."/>
            <person name="Takahashi Y."/>
            <person name="Nakagawa K."/>
            <person name="Okumura K."/>
            <person name="Nagase T."/>
            <person name="Nomura N."/>
            <person name="Kikuchi H."/>
            <person name="Masuho Y."/>
            <person name="Yamashita R."/>
            <person name="Nakai K."/>
            <person name="Yada T."/>
            <person name="Nakamura Y."/>
            <person name="Ohara O."/>
            <person name="Isogai T."/>
            <person name="Sugano S."/>
        </authorList>
    </citation>
    <scope>NUCLEOTIDE SEQUENCE [LARGE SCALE MRNA] (ISOFORM 1)</scope>
</reference>
<reference key="3">
    <citation type="submission" date="2005-09" db="EMBL/GenBank/DDBJ databases">
        <authorList>
            <person name="Mural R.J."/>
            <person name="Istrail S."/>
            <person name="Sutton G.G."/>
            <person name="Florea L."/>
            <person name="Halpern A.L."/>
            <person name="Mobarry C.M."/>
            <person name="Lippert R."/>
            <person name="Walenz B."/>
            <person name="Shatkay H."/>
            <person name="Dew I."/>
            <person name="Miller J.R."/>
            <person name="Flanigan M.J."/>
            <person name="Edwards N.J."/>
            <person name="Bolanos R."/>
            <person name="Fasulo D."/>
            <person name="Halldorsson B.V."/>
            <person name="Hannenhalli S."/>
            <person name="Turner R."/>
            <person name="Yooseph S."/>
            <person name="Lu F."/>
            <person name="Nusskern D.R."/>
            <person name="Shue B.C."/>
            <person name="Zheng X.H."/>
            <person name="Zhong F."/>
            <person name="Delcher A.L."/>
            <person name="Huson D.H."/>
            <person name="Kravitz S.A."/>
            <person name="Mouchard L."/>
            <person name="Reinert K."/>
            <person name="Remington K.A."/>
            <person name="Clark A.G."/>
            <person name="Waterman M.S."/>
            <person name="Eichler E.E."/>
            <person name="Adams M.D."/>
            <person name="Hunkapiller M.W."/>
            <person name="Myers E.W."/>
            <person name="Venter J.C."/>
        </authorList>
    </citation>
    <scope>NUCLEOTIDE SEQUENCE [LARGE SCALE GENOMIC DNA]</scope>
</reference>
<reference key="4">
    <citation type="journal article" date="2004" name="Genome Res.">
        <title>The status, quality, and expansion of the NIH full-length cDNA project: the Mammalian Gene Collection (MGC).</title>
        <authorList>
            <consortium name="The MGC Project Team"/>
        </authorList>
    </citation>
    <scope>NUCLEOTIDE SEQUENCE [LARGE SCALE MRNA] (ISOFORMS 1 AND 2)</scope>
    <source>
        <tissue>Muscle</tissue>
    </source>
</reference>
<reference key="5">
    <citation type="journal article" date="2004" name="Biochem. Biophys. Res. Commun.">
        <title>Identification and characterization of Noc2 as a potential Rab3B effector protein in epithelial cells.</title>
        <authorList>
            <person name="Manabe S."/>
            <person name="Nishimura N."/>
            <person name="Yamamoto Y."/>
            <person name="Kitamura H."/>
            <person name="Morimoto S."/>
            <person name="Imai M."/>
            <person name="Nagahiro S."/>
            <person name="Seino S."/>
            <person name="Sasaki T."/>
        </authorList>
    </citation>
    <scope>FUNCTION AS A RAB3B EFFECTOR</scope>
    <scope>INTERACTION WITH RAB3B</scope>
    <scope>SUBCELLULAR LOCATION</scope>
    <scope>TISSUE SPECIFICITY</scope>
</reference>
<feature type="chain" id="PRO_0000278263" description="Rab effector Noc2">
    <location>
        <begin position="1"/>
        <end position="315"/>
    </location>
</feature>
<feature type="domain" description="RabBD" evidence="3">
    <location>
        <begin position="41"/>
        <end position="158"/>
    </location>
</feature>
<feature type="zinc finger region" description="FYVE-type" evidence="2">
    <location>
        <begin position="89"/>
        <end position="146"/>
    </location>
</feature>
<feature type="region of interest" description="Disordered" evidence="4">
    <location>
        <begin position="170"/>
        <end position="315"/>
    </location>
</feature>
<feature type="compositionally biased region" description="Basic and acidic residues" evidence="4">
    <location>
        <begin position="184"/>
        <end position="193"/>
    </location>
</feature>
<feature type="compositionally biased region" description="Basic and acidic residues" evidence="4">
    <location>
        <begin position="221"/>
        <end position="240"/>
    </location>
</feature>
<feature type="compositionally biased region" description="Polar residues" evidence="4">
    <location>
        <begin position="262"/>
        <end position="275"/>
    </location>
</feature>
<feature type="compositionally biased region" description="Low complexity" evidence="4">
    <location>
        <begin position="298"/>
        <end position="315"/>
    </location>
</feature>
<feature type="binding site" evidence="2">
    <location>
        <position position="95"/>
    </location>
    <ligand>
        <name>Zn(2+)</name>
        <dbReference type="ChEBI" id="CHEBI:29105"/>
        <label>1</label>
    </ligand>
</feature>
<feature type="binding site" evidence="2">
    <location>
        <position position="98"/>
    </location>
    <ligand>
        <name>Zn(2+)</name>
        <dbReference type="ChEBI" id="CHEBI:29105"/>
        <label>1</label>
    </ligand>
</feature>
<feature type="binding site" evidence="2">
    <location>
        <position position="112"/>
    </location>
    <ligand>
        <name>Zn(2+)</name>
        <dbReference type="ChEBI" id="CHEBI:29105"/>
        <label>2</label>
    </ligand>
</feature>
<feature type="binding site" evidence="2">
    <location>
        <position position="115"/>
    </location>
    <ligand>
        <name>Zn(2+)</name>
        <dbReference type="ChEBI" id="CHEBI:29105"/>
        <label>2</label>
    </ligand>
</feature>
<feature type="binding site" evidence="2">
    <location>
        <position position="120"/>
    </location>
    <ligand>
        <name>Zn(2+)</name>
        <dbReference type="ChEBI" id="CHEBI:29105"/>
        <label>1</label>
    </ligand>
</feature>
<feature type="binding site" evidence="2">
    <location>
        <position position="123"/>
    </location>
    <ligand>
        <name>Zn(2+)</name>
        <dbReference type="ChEBI" id="CHEBI:29105"/>
        <label>1</label>
    </ligand>
</feature>
<feature type="binding site" evidence="2">
    <location>
        <position position="138"/>
    </location>
    <ligand>
        <name>Zn(2+)</name>
        <dbReference type="ChEBI" id="CHEBI:29105"/>
        <label>2</label>
    </ligand>
</feature>
<feature type="binding site" evidence="2">
    <location>
        <position position="141"/>
    </location>
    <ligand>
        <name>Zn(2+)</name>
        <dbReference type="ChEBI" id="CHEBI:29105"/>
        <label>2</label>
    </ligand>
</feature>
<feature type="splice variant" id="VSP_023244" description="In isoform 2." evidence="7">
    <location>
        <begin position="118"/>
        <end position="146"/>
    </location>
</feature>
<feature type="sequence conflict" description="In Ref. 4; AAH05153." evidence="8" ref="4">
    <original>R</original>
    <variation>Q</variation>
    <location>
        <position position="85"/>
    </location>
</feature>
<dbReference type="EMBL" id="AF129812">
    <property type="protein sequence ID" value="AAD45582.1"/>
    <property type="molecule type" value="mRNA"/>
</dbReference>
<dbReference type="EMBL" id="AK000469">
    <property type="protein sequence ID" value="BAA91186.1"/>
    <property type="molecule type" value="mRNA"/>
</dbReference>
<dbReference type="EMBL" id="CH471108">
    <property type="protein sequence ID" value="EAW90670.1"/>
    <property type="molecule type" value="Genomic_DNA"/>
</dbReference>
<dbReference type="EMBL" id="CH471108">
    <property type="protein sequence ID" value="EAW90671.1"/>
    <property type="molecule type" value="Genomic_DNA"/>
</dbReference>
<dbReference type="EMBL" id="BC005153">
    <property type="protein sequence ID" value="AAH05153.1"/>
    <property type="molecule type" value="mRNA"/>
</dbReference>
<dbReference type="EMBL" id="BC093776">
    <property type="protein sequence ID" value="AAH93776.1"/>
    <property type="molecule type" value="mRNA"/>
</dbReference>
<dbReference type="EMBL" id="BC113413">
    <property type="protein sequence ID" value="AAI13414.1"/>
    <property type="molecule type" value="mRNA"/>
</dbReference>
<dbReference type="CCDS" id="CCDS10994.1">
    <molecule id="Q9UNE2-1"/>
</dbReference>
<dbReference type="CCDS" id="CCDS54059.1">
    <molecule id="Q9UNE2-2"/>
</dbReference>
<dbReference type="RefSeq" id="NP_001177340.1">
    <molecule id="Q9UNE2-1"/>
    <property type="nucleotide sequence ID" value="NM_001190411.2"/>
</dbReference>
<dbReference type="RefSeq" id="NP_001177341.1">
    <molecule id="Q9UNE2-2"/>
    <property type="nucleotide sequence ID" value="NM_001190412.2"/>
</dbReference>
<dbReference type="RefSeq" id="NP_001177342.1">
    <molecule id="Q9UNE2-2"/>
    <property type="nucleotide sequence ID" value="NM_001190413.2"/>
</dbReference>
<dbReference type="RefSeq" id="NP_008918.1">
    <molecule id="Q9UNE2-1"/>
    <property type="nucleotide sequence ID" value="NM_006987.4"/>
</dbReference>
<dbReference type="RefSeq" id="XP_011533669.1">
    <property type="nucleotide sequence ID" value="XM_011535367.2"/>
</dbReference>
<dbReference type="RefSeq" id="XP_011533670.1">
    <property type="nucleotide sequence ID" value="XM_011535368.2"/>
</dbReference>
<dbReference type="SMR" id="Q9UNE2"/>
<dbReference type="BioGRID" id="114880">
    <property type="interactions" value="22"/>
</dbReference>
<dbReference type="FunCoup" id="Q9UNE2">
    <property type="interactions" value="80"/>
</dbReference>
<dbReference type="IntAct" id="Q9UNE2">
    <property type="interactions" value="17"/>
</dbReference>
<dbReference type="STRING" id="9606.ENSP00000328977"/>
<dbReference type="iPTMnet" id="Q9UNE2"/>
<dbReference type="PhosphoSitePlus" id="Q9UNE2"/>
<dbReference type="BioMuta" id="RPH3AL"/>
<dbReference type="DMDM" id="74735140"/>
<dbReference type="MassIVE" id="Q9UNE2"/>
<dbReference type="PaxDb" id="9606-ENSP00000328977"/>
<dbReference type="PeptideAtlas" id="Q9UNE2"/>
<dbReference type="ProteomicsDB" id="85280">
    <molecule id="Q9UNE2-1"/>
</dbReference>
<dbReference type="ProteomicsDB" id="85281">
    <molecule id="Q9UNE2-2"/>
</dbReference>
<dbReference type="Antibodypedia" id="10243">
    <property type="antibodies" value="210 antibodies from 26 providers"/>
</dbReference>
<dbReference type="DNASU" id="9501"/>
<dbReference type="Ensembl" id="ENST00000323434.12">
    <molecule id="Q9UNE2-2"/>
    <property type="protein sequence ID" value="ENSP00000319210.8"/>
    <property type="gene ID" value="ENSG00000181031.16"/>
</dbReference>
<dbReference type="Ensembl" id="ENST00000331302.12">
    <molecule id="Q9UNE2-1"/>
    <property type="protein sequence ID" value="ENSP00000328977.7"/>
    <property type="gene ID" value="ENSG00000181031.16"/>
</dbReference>
<dbReference type="Ensembl" id="ENST00000536489.6">
    <molecule id="Q9UNE2-2"/>
    <property type="protein sequence ID" value="ENSP00000438224.2"/>
    <property type="gene ID" value="ENSG00000181031.16"/>
</dbReference>
<dbReference type="Ensembl" id="ENST00000608278.2">
    <molecule id="Q9UNE2-1"/>
    <property type="protein sequence ID" value="ENSP00000483035.1"/>
    <property type="gene ID" value="ENSG00000262334.6"/>
</dbReference>
<dbReference type="Ensembl" id="ENST00000608519.5">
    <molecule id="Q9UNE2-2"/>
    <property type="protein sequence ID" value="ENSP00000476394.1"/>
    <property type="gene ID" value="ENSG00000262334.6"/>
</dbReference>
<dbReference type="Ensembl" id="ENST00000618002.4">
    <molecule id="Q9UNE2-1"/>
    <property type="protein sequence ID" value="ENSP00000479485.1"/>
    <property type="gene ID" value="ENSG00000181031.16"/>
</dbReference>
<dbReference type="Ensembl" id="ENST00000632000.1">
    <molecule id="Q9UNE2-2"/>
    <property type="protein sequence ID" value="ENSP00000487689.1"/>
    <property type="gene ID" value="ENSG00000262334.6"/>
</dbReference>
<dbReference type="Ensembl" id="ENST00000632545.1">
    <molecule id="Q9UNE2-2"/>
    <property type="protein sequence ID" value="ENSP00000487851.1"/>
    <property type="gene ID" value="ENSG00000262334.6"/>
</dbReference>
<dbReference type="Ensembl" id="ENST00000632616.1">
    <molecule id="Q9UNE2-1"/>
    <property type="protein sequence ID" value="ENSP00000487649.1"/>
    <property type="gene ID" value="ENSG00000262334.6"/>
</dbReference>
<dbReference type="GeneID" id="9501"/>
<dbReference type="KEGG" id="hsa:9501"/>
<dbReference type="MANE-Select" id="ENST00000331302.12">
    <property type="protein sequence ID" value="ENSP00000328977.7"/>
    <property type="RefSeq nucleotide sequence ID" value="NM_006987.4"/>
    <property type="RefSeq protein sequence ID" value="NP_008918.1"/>
</dbReference>
<dbReference type="UCSC" id="uc002fre.3">
    <molecule id="Q9UNE2-1"/>
    <property type="organism name" value="human"/>
</dbReference>
<dbReference type="AGR" id="HGNC:10296"/>
<dbReference type="CTD" id="9501"/>
<dbReference type="DisGeNET" id="9501"/>
<dbReference type="GeneCards" id="RPH3AL"/>
<dbReference type="HGNC" id="HGNC:10296">
    <property type="gene designation" value="RPH3AL"/>
</dbReference>
<dbReference type="HPA" id="ENSG00000181031">
    <property type="expression patterns" value="Tissue enhanced (pancreas, pituitary gland)"/>
</dbReference>
<dbReference type="MIM" id="604881">
    <property type="type" value="gene"/>
</dbReference>
<dbReference type="neXtProt" id="NX_Q9UNE2"/>
<dbReference type="OpenTargets" id="ENSG00000181031"/>
<dbReference type="PharmGKB" id="PA34658"/>
<dbReference type="VEuPathDB" id="HostDB:ENSG00000181031"/>
<dbReference type="eggNOG" id="KOG1013">
    <property type="taxonomic scope" value="Eukaryota"/>
</dbReference>
<dbReference type="GeneTree" id="ENSGT00440000034248"/>
<dbReference type="HOGENOM" id="CLU_076502_1_0_1"/>
<dbReference type="InParanoid" id="Q9UNE2"/>
<dbReference type="OMA" id="AGKRHTW"/>
<dbReference type="OrthoDB" id="270970at2759"/>
<dbReference type="PAN-GO" id="Q9UNE2">
    <property type="GO annotations" value="4 GO annotations based on evolutionary models"/>
</dbReference>
<dbReference type="PhylomeDB" id="Q9UNE2"/>
<dbReference type="TreeFam" id="TF342971"/>
<dbReference type="PathwayCommons" id="Q9UNE2"/>
<dbReference type="SignaLink" id="Q9UNE2"/>
<dbReference type="BioGRID-ORCS" id="9501">
    <property type="hits" value="11 hits in 1147 CRISPR screens"/>
</dbReference>
<dbReference type="ChiTaRS" id="RPH3AL">
    <property type="organism name" value="human"/>
</dbReference>
<dbReference type="GeneWiki" id="RPH3AL"/>
<dbReference type="GenomeRNAi" id="9501"/>
<dbReference type="Pharos" id="Q9UNE2">
    <property type="development level" value="Tbio"/>
</dbReference>
<dbReference type="PRO" id="PR:Q9UNE2"/>
<dbReference type="Proteomes" id="UP000005640">
    <property type="component" value="Chromosome 17"/>
</dbReference>
<dbReference type="RNAct" id="Q9UNE2">
    <property type="molecule type" value="protein"/>
</dbReference>
<dbReference type="Bgee" id="ENSG00000181031">
    <property type="expression patterns" value="Expressed in body of pancreas and 95 other cell types or tissues"/>
</dbReference>
<dbReference type="ExpressionAtlas" id="Q9UNE2">
    <property type="expression patterns" value="baseline and differential"/>
</dbReference>
<dbReference type="GO" id="GO:0005737">
    <property type="term" value="C:cytoplasm"/>
    <property type="evidence" value="ECO:0000304"/>
    <property type="project" value="ProtInc"/>
</dbReference>
<dbReference type="GO" id="GO:0098793">
    <property type="term" value="C:presynapse"/>
    <property type="evidence" value="ECO:0007669"/>
    <property type="project" value="GOC"/>
</dbReference>
<dbReference type="GO" id="GO:0045202">
    <property type="term" value="C:synapse"/>
    <property type="evidence" value="ECO:0000318"/>
    <property type="project" value="GO_Central"/>
</dbReference>
<dbReference type="GO" id="GO:0030658">
    <property type="term" value="C:transport vesicle membrane"/>
    <property type="evidence" value="ECO:0007669"/>
    <property type="project" value="UniProtKB-SubCell"/>
</dbReference>
<dbReference type="GO" id="GO:0008092">
    <property type="term" value="F:cytoskeletal protein binding"/>
    <property type="evidence" value="ECO:0000304"/>
    <property type="project" value="ProtInc"/>
</dbReference>
<dbReference type="GO" id="GO:0031267">
    <property type="term" value="F:small GTPase binding"/>
    <property type="evidence" value="ECO:0007669"/>
    <property type="project" value="InterPro"/>
</dbReference>
<dbReference type="GO" id="GO:0008270">
    <property type="term" value="F:zinc ion binding"/>
    <property type="evidence" value="ECO:0007669"/>
    <property type="project" value="UniProtKB-KW"/>
</dbReference>
<dbReference type="GO" id="GO:0099502">
    <property type="term" value="P:calcium-dependent activation of synaptic vesicle fusion"/>
    <property type="evidence" value="ECO:0000318"/>
    <property type="project" value="GO_Central"/>
</dbReference>
<dbReference type="GO" id="GO:0006887">
    <property type="term" value="P:exocytosis"/>
    <property type="evidence" value="ECO:0000304"/>
    <property type="project" value="ProtInc"/>
</dbReference>
<dbReference type="GO" id="GO:0007186">
    <property type="term" value="P:G protein-coupled receptor signaling pathway"/>
    <property type="evidence" value="ECO:0007669"/>
    <property type="project" value="Ensembl"/>
</dbReference>
<dbReference type="GO" id="GO:0042593">
    <property type="term" value="P:glucose homeostasis"/>
    <property type="evidence" value="ECO:0007669"/>
    <property type="project" value="Ensembl"/>
</dbReference>
<dbReference type="GO" id="GO:0006886">
    <property type="term" value="P:intracellular protein transport"/>
    <property type="evidence" value="ECO:0007669"/>
    <property type="project" value="InterPro"/>
</dbReference>
<dbReference type="GO" id="GO:0045744">
    <property type="term" value="P:negative regulation of G protein-coupled receptor signaling pathway"/>
    <property type="evidence" value="ECO:0007669"/>
    <property type="project" value="Ensembl"/>
</dbReference>
<dbReference type="GO" id="GO:0045956">
    <property type="term" value="P:positive regulation of calcium ion-dependent exocytosis"/>
    <property type="evidence" value="ECO:0000318"/>
    <property type="project" value="GO_Central"/>
</dbReference>
<dbReference type="GO" id="GO:0032024">
    <property type="term" value="P:positive regulation of insulin secretion"/>
    <property type="evidence" value="ECO:0007669"/>
    <property type="project" value="Ensembl"/>
</dbReference>
<dbReference type="CDD" id="cd15763">
    <property type="entry name" value="FYVE_RPH3L"/>
    <property type="match status" value="1"/>
</dbReference>
<dbReference type="FunFam" id="3.30.40.10:FF:000347">
    <property type="entry name" value="rab effector Noc2 isoform X1"/>
    <property type="match status" value="1"/>
</dbReference>
<dbReference type="Gene3D" id="3.30.40.10">
    <property type="entry name" value="Zinc/RING finger domain, C3HC4 (zinc finger)"/>
    <property type="match status" value="1"/>
</dbReference>
<dbReference type="InterPro" id="IPR041282">
    <property type="entry name" value="FYVE_2"/>
</dbReference>
<dbReference type="InterPro" id="IPR041857">
    <property type="entry name" value="Noc2_FYVE"/>
</dbReference>
<dbReference type="InterPro" id="IPR010911">
    <property type="entry name" value="Rab_BD"/>
</dbReference>
<dbReference type="InterPro" id="IPR043566">
    <property type="entry name" value="Rabphilin/DOC2/Noc2"/>
</dbReference>
<dbReference type="InterPro" id="IPR017455">
    <property type="entry name" value="Znf_FYVE-rel"/>
</dbReference>
<dbReference type="InterPro" id="IPR011011">
    <property type="entry name" value="Znf_FYVE_PHD"/>
</dbReference>
<dbReference type="InterPro" id="IPR013083">
    <property type="entry name" value="Znf_RING/FYVE/PHD"/>
</dbReference>
<dbReference type="PANTHER" id="PTHR45729:SF4">
    <property type="entry name" value="RAB EFFECTOR NOC2"/>
    <property type="match status" value="1"/>
</dbReference>
<dbReference type="PANTHER" id="PTHR45729">
    <property type="entry name" value="RABPHILIN, ISOFORM A"/>
    <property type="match status" value="1"/>
</dbReference>
<dbReference type="Pfam" id="PF02318">
    <property type="entry name" value="FYVE_2"/>
    <property type="match status" value="1"/>
</dbReference>
<dbReference type="SUPFAM" id="SSF57903">
    <property type="entry name" value="FYVE/PHD zinc finger"/>
    <property type="match status" value="1"/>
</dbReference>
<dbReference type="PROSITE" id="PS50916">
    <property type="entry name" value="RABBD"/>
    <property type="match status" value="1"/>
</dbReference>
<dbReference type="PROSITE" id="PS50178">
    <property type="entry name" value="ZF_FYVE"/>
    <property type="match status" value="1"/>
</dbReference>
<name>RPH3L_HUMAN</name>
<comment type="function">
    <text evidence="1 6">Rab GTPase effector involved in the late steps of regulated exocytosis, both in endocrine and exocrine cells (By similarity). Acts as a potential RAB3B effector protein in epithelial cells.</text>
</comment>
<comment type="subunit">
    <text evidence="1">Recruited to dense-core vesicles through specific interaction with RAB27A in endocrine cells. Interacts with RAB3A, RAB3B, RAB3C and RAB3D. Interacts with ZYX (By similarity).</text>
</comment>
<comment type="interaction">
    <interactant intactId="EBI-2855824">
        <id>Q9UNE2</id>
    </interactant>
    <interactant intactId="EBI-8643161">
        <id>Q9NX04</id>
        <label>AIRIM</label>
    </interactant>
    <organismsDiffer>false</organismsDiffer>
    <experiments>3</experiments>
</comment>
<comment type="interaction">
    <interactant intactId="EBI-2855824">
        <id>Q9UNE2</id>
    </interactant>
    <interactant intactId="EBI-17183751">
        <id>X5D778</id>
        <label>ANKRD11</label>
    </interactant>
    <organismsDiffer>false</organismsDiffer>
    <experiments>3</experiments>
</comment>
<comment type="interaction">
    <interactant intactId="EBI-2855824">
        <id>Q9UNE2</id>
    </interactant>
    <interactant intactId="EBI-1166928">
        <id>Q8N5M1</id>
        <label>ATPAF2</label>
    </interactant>
    <organismsDiffer>false</organismsDiffer>
    <experiments>3</experiments>
</comment>
<comment type="interaction">
    <interactant intactId="EBI-2855824">
        <id>Q9UNE2</id>
    </interactant>
    <interactant intactId="EBI-7060731">
        <id>P61978-2</id>
        <label>HNRNPK</label>
    </interactant>
    <organismsDiffer>false</organismsDiffer>
    <experiments>3</experiments>
</comment>
<comment type="interaction">
    <interactant intactId="EBI-2855824">
        <id>Q9UNE2</id>
    </interactant>
    <interactant intactId="EBI-722504">
        <id>O75525</id>
        <label>KHDRBS3</label>
    </interactant>
    <organismsDiffer>false</organismsDiffer>
    <experiments>3</experiments>
</comment>
<comment type="interaction">
    <interactant intactId="EBI-2855824">
        <id>Q9UNE2</id>
    </interactant>
    <interactant intactId="EBI-10172526">
        <id>Q9UJV3-2</id>
        <label>MID2</label>
    </interactant>
    <organismsDiffer>false</organismsDiffer>
    <experiments>3</experiments>
</comment>
<comment type="interaction">
    <interactant intactId="EBI-2855824">
        <id>Q9UNE2</id>
    </interactant>
    <interactant intactId="EBI-7950783">
        <id>Q96JP2</id>
        <label>MYO15B</label>
    </interactant>
    <organismsDiffer>false</organismsDiffer>
    <experiments>3</experiments>
</comment>
<comment type="interaction">
    <interactant intactId="EBI-2855824">
        <id>Q9UNE2</id>
    </interactant>
    <interactant intactId="EBI-11278955">
        <id>Q9UL41</id>
        <label>PNMA3</label>
    </interactant>
    <organismsDiffer>false</organismsDiffer>
    <experiments>3</experiments>
</comment>
<comment type="interaction">
    <interactant intactId="EBI-2855824">
        <id>Q9UNE2</id>
    </interactant>
    <interactant intactId="EBI-1053424">
        <id>O43741</id>
        <label>PRKAB2</label>
    </interactant>
    <organismsDiffer>false</organismsDiffer>
    <experiments>3</experiments>
</comment>
<comment type="interaction">
    <interactant intactId="EBI-2855824">
        <id>Q9UNE2</id>
    </interactant>
    <interactant intactId="EBI-355546">
        <id>P61289</id>
        <label>PSME3</label>
    </interactant>
    <organismsDiffer>false</organismsDiffer>
    <experiments>3</experiments>
</comment>
<comment type="interaction">
    <interactant intactId="EBI-2855824">
        <id>Q9UNE2</id>
    </interactant>
    <interactant intactId="EBI-10179046">
        <id>O00194</id>
        <label>RAB27B</label>
    </interactant>
    <organismsDiffer>false</organismsDiffer>
    <experiments>3</experiments>
</comment>
<comment type="interaction">
    <interactant intactId="EBI-2855824">
        <id>Q9UNE2</id>
    </interactant>
    <interactant intactId="EBI-748350">
        <id>Q9UHP6</id>
        <label>RSPH14</label>
    </interactant>
    <organismsDiffer>false</organismsDiffer>
    <experiments>3</experiments>
</comment>
<comment type="interaction">
    <interactant intactId="EBI-2855824">
        <id>Q9UNE2</id>
    </interactant>
    <interactant intactId="EBI-748391">
        <id>Q9BWG6</id>
        <label>SCNM1</label>
    </interactant>
    <organismsDiffer>false</organismsDiffer>
    <experiments>3</experiments>
</comment>
<comment type="subcellular location">
    <subcellularLocation>
        <location evidence="6">Cytoplasm</location>
    </subcellularLocation>
    <subcellularLocation>
        <location evidence="6">Cytoplasmic vesicle</location>
        <location evidence="6">Secretory vesicle membrane</location>
    </subcellularLocation>
    <text>Recruited to the vesicle membrane in a GTP- and RAB3B-dependent manner in epithelial cells.</text>
</comment>
<comment type="alternative products">
    <event type="alternative splicing"/>
    <isoform>
        <id>Q9UNE2-1</id>
        <name>1</name>
        <sequence type="displayed"/>
    </isoform>
    <isoform>
        <id>Q9UNE2-2</id>
        <name>2</name>
        <sequence type="described" ref="VSP_023244"/>
    </isoform>
</comment>
<comment type="tissue specificity">
    <text evidence="5 6">Moderate to high levels of expression in thyroid, ovary, stomach, heart, pancreas, skeletal muscle, kidney and liver. Also detected in epithelial cells.</text>
</comment>
<comment type="domain">
    <text evidence="1">The N-terminus of the RabBD domain is necessary and sufficient for interaction with RAB27A.</text>
</comment>
<accession>Q9UNE2</accession>
<accession>D3DTG7</accession>
<accession>Q9BSB3</accession>